<evidence type="ECO:0000255" key="1">
    <source>
        <dbReference type="HAMAP-Rule" id="MF_04068"/>
    </source>
</evidence>
<comment type="function">
    <text evidence="1">Plays critical roles in virus replication, from virus entry and uncoating to assembly and budding of the virus particle. M1 binding to ribonucleocapsids (RNPs) in nucleus seems to inhibit viral transcription. Interaction of viral NEP with M1-RNP is thought to promote nuclear export of the complex, which is targeted to the virion assembly site at the apical plasma membrane in polarized epithelial cells. Interactions with NA and HA may bring M1, a non-raft-associated protein, into lipid rafts. Forms a continuous shell on the inner side of the lipid bilayer in virion, where it binds the RNP. During virus entry into cell, the M2 ion channel acidifies the internal virion core, inducing M1 dissociation from the RNP. M1-free RNPs are transported to the nucleus, where viral transcription and replication can take place.</text>
</comment>
<comment type="function">
    <text evidence="1">Determines the virion's shape: spherical or filamentous. Clinical isolates of influenza are characterized by the presence of significant proportion of filamentous virions, whereas after multiple passage on eggs or cell culture, virions have only spherical morphology. Filamentous virions are thought to be important to infect neighboring cells, and spherical virions more suited to spread through aerosol between hosts organisms.</text>
</comment>
<comment type="subunit">
    <text evidence="1">Homodimer and homomultimer. Interacts with NEP. Binds ribonucleocapsid by both interacting with genomic RNA and NP protein. May interact with HA and NA. Cannot bind NP without genomic RNA.</text>
</comment>
<comment type="subcellular location">
    <subcellularLocation>
        <location evidence="1">Virion membrane</location>
        <topology evidence="1">Peripheral membrane protein</topology>
        <orientation evidence="1">Cytoplasmic side</orientation>
    </subcellularLocation>
    <subcellularLocation>
        <location evidence="1">Host nucleus</location>
    </subcellularLocation>
</comment>
<comment type="alternative products">
    <event type="alternative splicing"/>
    <isoform>
        <id>Q20P02-1</id>
        <name>M1</name>
        <sequence type="displayed"/>
    </isoform>
    <isoform>
        <id>Q20P03-1</id>
        <name>M2</name>
        <sequence type="external"/>
    </isoform>
    <text>Only the first 9 residues are shared by the 2 isoforms.</text>
</comment>
<comment type="miscellaneous">
    <text evidence="1">Most abundant protein in virion. When expressed alone can form virus-like particles in transfected cells.</text>
</comment>
<comment type="similarity">
    <text evidence="1">Belongs to the influenza viruses Matrix protein M1 family.</text>
</comment>
<organism>
    <name type="scientific">Influenza A virus (strain A/Turkey/Ontario/6118/1968 H8N4)</name>
    <dbReference type="NCBI Taxonomy" id="311175"/>
    <lineage>
        <taxon>Viruses</taxon>
        <taxon>Riboviria</taxon>
        <taxon>Orthornavirae</taxon>
        <taxon>Negarnaviricota</taxon>
        <taxon>Polyploviricotina</taxon>
        <taxon>Insthoviricetes</taxon>
        <taxon>Articulavirales</taxon>
        <taxon>Orthomyxoviridae</taxon>
        <taxon>Alphainfluenzavirus</taxon>
        <taxon>Alphainfluenzavirus influenzae</taxon>
        <taxon>Influenza A virus</taxon>
    </lineage>
</organism>
<proteinExistence type="inferred from homology"/>
<accession>Q20P02</accession>
<organismHost>
    <name type="scientific">Aves</name>
    <dbReference type="NCBI Taxonomy" id="8782"/>
</organismHost>
<reference key="1">
    <citation type="journal article" date="2006" name="Science">
        <title>Large-scale sequence analysis of avian influenza isolates.</title>
        <authorList>
            <person name="Obenauer J.C."/>
            <person name="Denson J."/>
            <person name="Mehta P.K."/>
            <person name="Su X."/>
            <person name="Mukatira S."/>
            <person name="Finkelstein D.B."/>
            <person name="Xu X."/>
            <person name="Wang J."/>
            <person name="Ma J."/>
            <person name="Fan Y."/>
            <person name="Rakestraw K.M."/>
            <person name="Webster R.G."/>
            <person name="Hoffmann E."/>
            <person name="Krauss S."/>
            <person name="Zheng J."/>
            <person name="Zhang Z."/>
            <person name="Naeve C.W."/>
        </authorList>
    </citation>
    <scope>NUCLEOTIDE SEQUENCE [GENOMIC RNA]</scope>
</reference>
<name>M1_I68A3</name>
<protein>
    <recommendedName>
        <fullName evidence="1">Matrix protein 1</fullName>
        <shortName evidence="1">M1</shortName>
    </recommendedName>
</protein>
<sequence length="252" mass="27910">MSLLTEVETYVLSIVPSGPLKAEIAQRLEDVFAGKNTDLEALMEWLKTRPILSPLTKGILGFVFTLTVPSERGLQRRRFVQNALNGNGDPNNMDRAVKLYRKLKREITFHGAKEVALSYSTGALASCMGLIYNRMGTVTTEVAFGLVCATCEQIADSQHRSHRQMVTTTNPLIRHENRMVLASTTAKAMEQMAGSSEQAAEAMEVASQARQMVQAMRTIGTHPSSSAGLKDDLLENLQAYQKRMGVQMQRFK</sequence>
<keyword id="KW-0025">Alternative splicing</keyword>
<keyword id="KW-1048">Host nucleus</keyword>
<keyword id="KW-0472">Membrane</keyword>
<keyword id="KW-0694">RNA-binding</keyword>
<keyword id="KW-0468">Viral matrix protein</keyword>
<keyword id="KW-0946">Virion</keyword>
<dbReference type="EMBL" id="CY005828">
    <property type="protein sequence ID" value="ABB20525.1"/>
    <property type="molecule type" value="Genomic_RNA"/>
</dbReference>
<dbReference type="SMR" id="Q20P02"/>
<dbReference type="Proteomes" id="UP000007770">
    <property type="component" value="Genome"/>
</dbReference>
<dbReference type="GO" id="GO:0042025">
    <property type="term" value="C:host cell nucleus"/>
    <property type="evidence" value="ECO:0007669"/>
    <property type="project" value="UniProtKB-SubCell"/>
</dbReference>
<dbReference type="GO" id="GO:0016020">
    <property type="term" value="C:membrane"/>
    <property type="evidence" value="ECO:0007669"/>
    <property type="project" value="UniProtKB-KW"/>
</dbReference>
<dbReference type="GO" id="GO:0055036">
    <property type="term" value="C:virion membrane"/>
    <property type="evidence" value="ECO:0007669"/>
    <property type="project" value="UniProtKB-SubCell"/>
</dbReference>
<dbReference type="GO" id="GO:0003723">
    <property type="term" value="F:RNA binding"/>
    <property type="evidence" value="ECO:0007669"/>
    <property type="project" value="UniProtKB-UniRule"/>
</dbReference>
<dbReference type="GO" id="GO:0039660">
    <property type="term" value="F:structural constituent of virion"/>
    <property type="evidence" value="ECO:0007669"/>
    <property type="project" value="UniProtKB-UniRule"/>
</dbReference>
<dbReference type="GO" id="GO:0046761">
    <property type="term" value="P:viral budding from plasma membrane"/>
    <property type="evidence" value="ECO:0007669"/>
    <property type="project" value="UniProtKB-UniRule"/>
</dbReference>
<dbReference type="FunFam" id="1.10.10.180:FF:000001">
    <property type="entry name" value="Matrix protein 1"/>
    <property type="match status" value="1"/>
</dbReference>
<dbReference type="FunFam" id="1.20.91.10:FF:000001">
    <property type="entry name" value="Matrix protein 1"/>
    <property type="match status" value="1"/>
</dbReference>
<dbReference type="Gene3D" id="1.10.10.180">
    <property type="match status" value="1"/>
</dbReference>
<dbReference type="Gene3D" id="1.20.91.10">
    <property type="match status" value="1"/>
</dbReference>
<dbReference type="HAMAP" id="MF_04068">
    <property type="entry name" value="INFV_M1"/>
    <property type="match status" value="1"/>
</dbReference>
<dbReference type="InterPro" id="IPR036039">
    <property type="entry name" value="Flu_matrix_M1"/>
</dbReference>
<dbReference type="InterPro" id="IPR013188">
    <property type="entry name" value="Flu_matrix_M1_C"/>
</dbReference>
<dbReference type="InterPro" id="IPR001561">
    <property type="entry name" value="Flu_matrix_M1_N"/>
</dbReference>
<dbReference type="InterPro" id="IPR015423">
    <property type="entry name" value="Flu_matrix_M1_N_sub1"/>
</dbReference>
<dbReference type="InterPro" id="IPR015799">
    <property type="entry name" value="Flu_matrix_M1_N_sub2"/>
</dbReference>
<dbReference type="InterPro" id="IPR037533">
    <property type="entry name" value="INFV_M1"/>
</dbReference>
<dbReference type="Pfam" id="PF00598">
    <property type="entry name" value="Flu_M1"/>
    <property type="match status" value="1"/>
</dbReference>
<dbReference type="Pfam" id="PF08289">
    <property type="entry name" value="Flu_M1_C"/>
    <property type="match status" value="1"/>
</dbReference>
<dbReference type="SMART" id="SM00759">
    <property type="entry name" value="Flu_M1_C"/>
    <property type="match status" value="1"/>
</dbReference>
<dbReference type="SUPFAM" id="SSF48145">
    <property type="entry name" value="Influenza virus matrix protein M1"/>
    <property type="match status" value="1"/>
</dbReference>
<feature type="chain" id="PRO_0000274805" description="Matrix protein 1">
    <location>
        <begin position="1"/>
        <end position="252"/>
    </location>
</feature>
<feature type="region of interest" description="Membrane-binding" evidence="1">
    <location>
        <begin position="1"/>
        <end position="164"/>
    </location>
</feature>
<feature type="region of interest" description="RNP-binding" evidence="1">
    <location>
        <begin position="165"/>
        <end position="252"/>
    </location>
</feature>
<feature type="short sequence motif" description="Nuclear localization signal" evidence="1">
    <location>
        <begin position="101"/>
        <end position="105"/>
    </location>
</feature>
<gene>
    <name evidence="1" type="primary">M</name>
</gene>